<organism>
    <name type="scientific">Bacillus subtilis (strain 168)</name>
    <dbReference type="NCBI Taxonomy" id="224308"/>
    <lineage>
        <taxon>Bacteria</taxon>
        <taxon>Bacillati</taxon>
        <taxon>Bacillota</taxon>
        <taxon>Bacilli</taxon>
        <taxon>Bacillales</taxon>
        <taxon>Bacillaceae</taxon>
        <taxon>Bacillus</taxon>
    </lineage>
</organism>
<proteinExistence type="evidence at protein level"/>
<reference key="1">
    <citation type="journal article" date="1996" name="Microbiology">
        <title>The 52 degrees-55 degrees segment of the Bacillus subtilis chromosome: a region devoted to purine uptake and metabolism, and containing the genes cotA, gabP and guaA and the pur gene cluster within a 34960 bp nucleotide sequence.</title>
        <authorList>
            <person name="Borriss R."/>
            <person name="Porwollik S."/>
            <person name="Schroeter R."/>
        </authorList>
    </citation>
    <scope>NUCLEOTIDE SEQUENCE [GENOMIC DNA]</scope>
    <source>
        <strain>168</strain>
    </source>
</reference>
<reference key="2">
    <citation type="journal article" date="1997" name="Nature">
        <title>The complete genome sequence of the Gram-positive bacterium Bacillus subtilis.</title>
        <authorList>
            <person name="Kunst F."/>
            <person name="Ogasawara N."/>
            <person name="Moszer I."/>
            <person name="Albertini A.M."/>
            <person name="Alloni G."/>
            <person name="Azevedo V."/>
            <person name="Bertero M.G."/>
            <person name="Bessieres P."/>
            <person name="Bolotin A."/>
            <person name="Borchert S."/>
            <person name="Borriss R."/>
            <person name="Boursier L."/>
            <person name="Brans A."/>
            <person name="Braun M."/>
            <person name="Brignell S.C."/>
            <person name="Bron S."/>
            <person name="Brouillet S."/>
            <person name="Bruschi C.V."/>
            <person name="Caldwell B."/>
            <person name="Capuano V."/>
            <person name="Carter N.M."/>
            <person name="Choi S.-K."/>
            <person name="Codani J.-J."/>
            <person name="Connerton I.F."/>
            <person name="Cummings N.J."/>
            <person name="Daniel R.A."/>
            <person name="Denizot F."/>
            <person name="Devine K.M."/>
            <person name="Duesterhoeft A."/>
            <person name="Ehrlich S.D."/>
            <person name="Emmerson P.T."/>
            <person name="Entian K.-D."/>
            <person name="Errington J."/>
            <person name="Fabret C."/>
            <person name="Ferrari E."/>
            <person name="Foulger D."/>
            <person name="Fritz C."/>
            <person name="Fujita M."/>
            <person name="Fujita Y."/>
            <person name="Fuma S."/>
            <person name="Galizzi A."/>
            <person name="Galleron N."/>
            <person name="Ghim S.-Y."/>
            <person name="Glaser P."/>
            <person name="Goffeau A."/>
            <person name="Golightly E.J."/>
            <person name="Grandi G."/>
            <person name="Guiseppi G."/>
            <person name="Guy B.J."/>
            <person name="Haga K."/>
            <person name="Haiech J."/>
            <person name="Harwood C.R."/>
            <person name="Henaut A."/>
            <person name="Hilbert H."/>
            <person name="Holsappel S."/>
            <person name="Hosono S."/>
            <person name="Hullo M.-F."/>
            <person name="Itaya M."/>
            <person name="Jones L.-M."/>
            <person name="Joris B."/>
            <person name="Karamata D."/>
            <person name="Kasahara Y."/>
            <person name="Klaerr-Blanchard M."/>
            <person name="Klein C."/>
            <person name="Kobayashi Y."/>
            <person name="Koetter P."/>
            <person name="Koningstein G."/>
            <person name="Krogh S."/>
            <person name="Kumano M."/>
            <person name="Kurita K."/>
            <person name="Lapidus A."/>
            <person name="Lardinois S."/>
            <person name="Lauber J."/>
            <person name="Lazarevic V."/>
            <person name="Lee S.-M."/>
            <person name="Levine A."/>
            <person name="Liu H."/>
            <person name="Masuda S."/>
            <person name="Mauel C."/>
            <person name="Medigue C."/>
            <person name="Medina N."/>
            <person name="Mellado R.P."/>
            <person name="Mizuno M."/>
            <person name="Moestl D."/>
            <person name="Nakai S."/>
            <person name="Noback M."/>
            <person name="Noone D."/>
            <person name="O'Reilly M."/>
            <person name="Ogawa K."/>
            <person name="Ogiwara A."/>
            <person name="Oudega B."/>
            <person name="Park S.-H."/>
            <person name="Parro V."/>
            <person name="Pohl T.M."/>
            <person name="Portetelle D."/>
            <person name="Porwollik S."/>
            <person name="Prescott A.M."/>
            <person name="Presecan E."/>
            <person name="Pujic P."/>
            <person name="Purnelle B."/>
            <person name="Rapoport G."/>
            <person name="Rey M."/>
            <person name="Reynolds S."/>
            <person name="Rieger M."/>
            <person name="Rivolta C."/>
            <person name="Rocha E."/>
            <person name="Roche B."/>
            <person name="Rose M."/>
            <person name="Sadaie Y."/>
            <person name="Sato T."/>
            <person name="Scanlan E."/>
            <person name="Schleich S."/>
            <person name="Schroeter R."/>
            <person name="Scoffone F."/>
            <person name="Sekiguchi J."/>
            <person name="Sekowska A."/>
            <person name="Seror S.J."/>
            <person name="Serror P."/>
            <person name="Shin B.-S."/>
            <person name="Soldo B."/>
            <person name="Sorokin A."/>
            <person name="Tacconi E."/>
            <person name="Takagi T."/>
            <person name="Takahashi H."/>
            <person name="Takemaru K."/>
            <person name="Takeuchi M."/>
            <person name="Tamakoshi A."/>
            <person name="Tanaka T."/>
            <person name="Terpstra P."/>
            <person name="Tognoni A."/>
            <person name="Tosato V."/>
            <person name="Uchiyama S."/>
            <person name="Vandenbol M."/>
            <person name="Vannier F."/>
            <person name="Vassarotti A."/>
            <person name="Viari A."/>
            <person name="Wambutt R."/>
            <person name="Wedler E."/>
            <person name="Wedler H."/>
            <person name="Weitzenegger T."/>
            <person name="Winters P."/>
            <person name="Wipat A."/>
            <person name="Yamamoto H."/>
            <person name="Yamane K."/>
            <person name="Yasumoto K."/>
            <person name="Yata K."/>
            <person name="Yoshida K."/>
            <person name="Yoshikawa H.-F."/>
            <person name="Zumstein E."/>
            <person name="Yoshikawa H."/>
            <person name="Danchin A."/>
        </authorList>
    </citation>
    <scope>NUCLEOTIDE SEQUENCE [LARGE SCALE GENOMIC DNA]</scope>
    <source>
        <strain>168</strain>
    </source>
</reference>
<reference key="3">
    <citation type="journal article" date="1987" name="J. Bacteriol.">
        <title>Genetic and physiological characterization of Bacillus subtilis mutants resistant to purine analogs.</title>
        <authorList>
            <person name="Saxild H.H."/>
            <person name="Nygaard P."/>
        </authorList>
    </citation>
    <scope>FUNCTION IN PURINE UPTAKE</scope>
    <scope>DISRUPTION PHENOTYPE</scope>
    <source>
        <strain>168</strain>
    </source>
</reference>
<reference key="4">
    <citation type="journal article" date="2001" name="J. Bacteriol.">
        <title>Definition of the Bacillus subtilis PurR operator using genetic and bioinformatic tools and expansion of the PurR regulon with glyA, guaC, pbuG, xpt-pbuX, yqhZ-folD, and pbuO.</title>
        <authorList>
            <person name="Saxild H.H."/>
            <person name="Brunstedt K."/>
            <person name="Nielsen K.I."/>
            <person name="Jarmer H."/>
            <person name="Nygaard P."/>
        </authorList>
    </citation>
    <scope>FUNCTION IN HYPOXANTHINE UPTAKE</scope>
    <scope>INDUCTION</scope>
    <scope>DISRUPTION PHENOTYPE</scope>
    <source>
        <strain>168</strain>
    </source>
</reference>
<reference key="5">
    <citation type="journal article" date="2003" name="J. Bacteriol.">
        <title>Definition of a second Bacillus subtilis pur regulon comprising the pur and xpt-pbuX operons plus pbuG, nupG (yxjA), and pbuE (ydhL).</title>
        <authorList>
            <person name="Johansen L.E."/>
            <person name="Nygaard P."/>
            <person name="Lassen C."/>
            <person name="Agersoe Y."/>
            <person name="Saxild H.H."/>
        </authorList>
    </citation>
    <scope>INDUCTION</scope>
    <source>
        <strain>168</strain>
    </source>
</reference>
<keyword id="KW-1003">Cell membrane</keyword>
<keyword id="KW-0472">Membrane</keyword>
<keyword id="KW-1185">Reference proteome</keyword>
<keyword id="KW-0812">Transmembrane</keyword>
<keyword id="KW-1133">Transmembrane helix</keyword>
<keyword id="KW-0813">Transport</keyword>
<feature type="chain" id="PRO_0000375868" description="Guanine/hypoxanthine permease PbuG">
    <location>
        <begin position="1"/>
        <end position="440"/>
    </location>
</feature>
<feature type="transmembrane region" description="Helical" evidence="1">
    <location>
        <begin position="18"/>
        <end position="38"/>
    </location>
</feature>
<feature type="transmembrane region" description="Helical" evidence="1">
    <location>
        <begin position="57"/>
        <end position="77"/>
    </location>
</feature>
<feature type="transmembrane region" description="Helical" evidence="1">
    <location>
        <begin position="81"/>
        <end position="101"/>
    </location>
</feature>
<feature type="transmembrane region" description="Helical" evidence="1">
    <location>
        <begin position="107"/>
        <end position="127"/>
    </location>
</feature>
<feature type="transmembrane region" description="Helical" evidence="1">
    <location>
        <begin position="142"/>
        <end position="162"/>
    </location>
</feature>
<feature type="transmembrane region" description="Helical" evidence="1">
    <location>
        <begin position="175"/>
        <end position="195"/>
    </location>
</feature>
<feature type="transmembrane region" description="Helical" evidence="1">
    <location>
        <begin position="201"/>
        <end position="221"/>
    </location>
</feature>
<feature type="transmembrane region" description="Helical" evidence="1">
    <location>
        <begin position="251"/>
        <end position="271"/>
    </location>
</feature>
<feature type="transmembrane region" description="Helical" evidence="1">
    <location>
        <begin position="291"/>
        <end position="311"/>
    </location>
</feature>
<feature type="transmembrane region" description="Helical" evidence="1">
    <location>
        <begin position="327"/>
        <end position="347"/>
    </location>
</feature>
<feature type="transmembrane region" description="Helical" evidence="1">
    <location>
        <begin position="354"/>
        <end position="374"/>
    </location>
</feature>
<feature type="transmembrane region" description="Helical" evidence="1">
    <location>
        <begin position="388"/>
        <end position="408"/>
    </location>
</feature>
<feature type="transmembrane region" description="Helical" evidence="1">
    <location>
        <begin position="419"/>
        <end position="439"/>
    </location>
</feature>
<comment type="function">
    <text evidence="2 4">Involved in the uptake of the purine bases hypoxanthine and guanine.</text>
</comment>
<comment type="subcellular location">
    <subcellularLocation>
        <location evidence="5">Cell membrane</location>
        <topology evidence="5">Multi-pass membrane protein</topology>
    </subcellularLocation>
</comment>
<comment type="induction">
    <text evidence="2 3">Expression is regulated by both purR and xptR regulons. Negatively regulated by hypoxanthine and guanine.</text>
</comment>
<comment type="disruption phenotype">
    <text evidence="2 4">Cells lacking this gene show normal growth on inosine as the purine source, normal hypoxanthine-guanine phosphoribosyltransferase activity, and are resistant to azaguanine.</text>
</comment>
<comment type="similarity">
    <text evidence="5">Belongs to the nucleobase:cation symporter-2 (NCS2) (TC 2.A.40) family. Azg-like subfamily.</text>
</comment>
<dbReference type="EMBL" id="U51115">
    <property type="protein sequence ID" value="AAB62312.1"/>
    <property type="molecule type" value="Genomic_DNA"/>
</dbReference>
<dbReference type="EMBL" id="AL009126">
    <property type="protein sequence ID" value="CAB12456.1"/>
    <property type="molecule type" value="Genomic_DNA"/>
</dbReference>
<dbReference type="PIR" id="F69791">
    <property type="entry name" value="F69791"/>
</dbReference>
<dbReference type="RefSeq" id="NP_388518.1">
    <property type="nucleotide sequence ID" value="NC_000964.3"/>
</dbReference>
<dbReference type="RefSeq" id="WP_003243780.1">
    <property type="nucleotide sequence ID" value="NZ_OZ025638.1"/>
</dbReference>
<dbReference type="SMR" id="O34987"/>
<dbReference type="FunCoup" id="O34987">
    <property type="interactions" value="428"/>
</dbReference>
<dbReference type="STRING" id="224308.BSU06370"/>
<dbReference type="TCDB" id="2.A.40.7.2">
    <property type="family name" value="the nucleobase/ascorbate transporter (nat) or nucleobase:cation symporter-2 (ncs2) family"/>
</dbReference>
<dbReference type="PaxDb" id="224308-BSU06370"/>
<dbReference type="DNASU" id="936043"/>
<dbReference type="EnsemblBacteria" id="CAB12456">
    <property type="protein sequence ID" value="CAB12456"/>
    <property type="gene ID" value="BSU_06370"/>
</dbReference>
<dbReference type="GeneID" id="936043"/>
<dbReference type="KEGG" id="bsu:BSU06370"/>
<dbReference type="PATRIC" id="fig|224308.179.peg.692"/>
<dbReference type="eggNOG" id="COG2252">
    <property type="taxonomic scope" value="Bacteria"/>
</dbReference>
<dbReference type="InParanoid" id="O34987"/>
<dbReference type="OrthoDB" id="9808458at2"/>
<dbReference type="PhylomeDB" id="O34987"/>
<dbReference type="BioCyc" id="BSUB:BSU06370-MONOMER"/>
<dbReference type="Proteomes" id="UP000001570">
    <property type="component" value="Chromosome"/>
</dbReference>
<dbReference type="GO" id="GO:0005886">
    <property type="term" value="C:plasma membrane"/>
    <property type="evidence" value="ECO:0000318"/>
    <property type="project" value="GO_Central"/>
</dbReference>
<dbReference type="GO" id="GO:0005345">
    <property type="term" value="F:purine nucleobase transmembrane transporter activity"/>
    <property type="evidence" value="ECO:0000318"/>
    <property type="project" value="GO_Central"/>
</dbReference>
<dbReference type="InterPro" id="IPR045018">
    <property type="entry name" value="Azg-like"/>
</dbReference>
<dbReference type="InterPro" id="IPR026033">
    <property type="entry name" value="Azg-like_bact_archaea"/>
</dbReference>
<dbReference type="InterPro" id="IPR006043">
    <property type="entry name" value="NCS2"/>
</dbReference>
<dbReference type="PANTHER" id="PTHR43337:SF11">
    <property type="entry name" value="GUANINE_HYPOXANTHINE PERMEASE PBUG"/>
    <property type="match status" value="1"/>
</dbReference>
<dbReference type="PANTHER" id="PTHR43337">
    <property type="entry name" value="XANTHINE/URACIL PERMEASE C887.17-RELATED"/>
    <property type="match status" value="1"/>
</dbReference>
<dbReference type="Pfam" id="PF00860">
    <property type="entry name" value="Xan_ur_permease"/>
    <property type="match status" value="1"/>
</dbReference>
<dbReference type="PIRSF" id="PIRSF005353">
    <property type="entry name" value="PbuG"/>
    <property type="match status" value="1"/>
</dbReference>
<protein>
    <recommendedName>
        <fullName>Guanine/hypoxanthine permease PbuG</fullName>
    </recommendedName>
</protein>
<gene>
    <name type="primary">pbuG</name>
    <name type="synonym">yebB</name>
    <name type="ordered locus">BSU06370</name>
</gene>
<accession>O34987</accession>
<accession>Q79C44</accession>
<name>PBUG_BACSU</name>
<sequence length="440" mass="46191">MKTFFQFDELGTSYRNEIIGGLTTFLSMAYILFVNPITLALESVKDFPEALRIDQGAVFTATALASAAGCILMGLIARYPIAIAPGMGLNAFFAFSVVLGMGISWQAALSGVFISGLIFVALSLTGFREKIINAIPPELKLAVGAGIGLFITFVGLQGSGIITANPSTLVTIGNIHSGPVLLTIFGVIVTVILMVLRVNAGVFIGMLLTAVAGMIFGLVPVPTQIIGSVPSLAPTFGQAWIHLPDIFSVQMLIVILTFLFVGFFDTAGTLVAVATQAGLMKENKLPRAGRALLADSSSIVIGAVLGTSTTTSYVESSSGVAAGARSGFAAIVTGILFLLATFFSPLLSVVTSNVTAPALIIVGALMVAPLGKIAWDKFEVAVPAFLTMIMMPLTYSIATGIAIGFIFYPITMVCKGKAKEVHPIMYGLFVVFILYFIFLK</sequence>
<evidence type="ECO:0000255" key="1"/>
<evidence type="ECO:0000269" key="2">
    <source>
    </source>
</evidence>
<evidence type="ECO:0000269" key="3">
    <source>
    </source>
</evidence>
<evidence type="ECO:0000269" key="4">
    <source>
    </source>
</evidence>
<evidence type="ECO:0000305" key="5"/>